<sequence>MKVRVGTTNPVKVRATERAFLRTFPDREITVEAVSVDPGVPPQPVGMEEVHQGAKNRAREAWNRGSYSVGLEAGLIRVGDVYVDLHVAVVRDPKGRETVGTSPGFQLPPDVTEEALSGEEVGEVFSELVGVREIGKRSGAIGVLSNGKVLREDLCELAILMALIGLETSR</sequence>
<feature type="chain" id="PRO_0000156361" description="Probable inosine/xanthosine triphosphatase">
    <location>
        <begin position="1"/>
        <end position="170"/>
    </location>
</feature>
<feature type="binding site" evidence="1">
    <location>
        <begin position="7"/>
        <end position="12"/>
    </location>
    <ligand>
        <name>substrate</name>
    </ligand>
</feature>
<feature type="binding site" evidence="1">
    <location>
        <position position="37"/>
    </location>
    <ligand>
        <name>Mg(2+)</name>
        <dbReference type="ChEBI" id="CHEBI:18420"/>
    </ligand>
</feature>
<gene>
    <name type="ordered locus">MK1503</name>
</gene>
<dbReference type="EC" id="3.6.1.73" evidence="1"/>
<dbReference type="EMBL" id="AE009439">
    <property type="protein sequence ID" value="AAM02716.1"/>
    <property type="molecule type" value="Genomic_DNA"/>
</dbReference>
<dbReference type="RefSeq" id="WP_011019871.1">
    <property type="nucleotide sequence ID" value="NC_003551.1"/>
</dbReference>
<dbReference type="SMR" id="Q8TV89"/>
<dbReference type="FunCoup" id="Q8TV89">
    <property type="interactions" value="21"/>
</dbReference>
<dbReference type="STRING" id="190192.MK1503"/>
<dbReference type="PaxDb" id="190192-MK1503"/>
<dbReference type="EnsemblBacteria" id="AAM02716">
    <property type="protein sequence ID" value="AAM02716"/>
    <property type="gene ID" value="MK1503"/>
</dbReference>
<dbReference type="GeneID" id="1478098"/>
<dbReference type="KEGG" id="mka:MK1503"/>
<dbReference type="HOGENOM" id="CLU_087417_0_1_2"/>
<dbReference type="InParanoid" id="Q8TV89"/>
<dbReference type="OrthoDB" id="52857at2157"/>
<dbReference type="Proteomes" id="UP000001826">
    <property type="component" value="Chromosome"/>
</dbReference>
<dbReference type="GO" id="GO:0103023">
    <property type="term" value="F:ITPase activity"/>
    <property type="evidence" value="ECO:0007669"/>
    <property type="project" value="UniProtKB-EC"/>
</dbReference>
<dbReference type="GO" id="GO:0046872">
    <property type="term" value="F:metal ion binding"/>
    <property type="evidence" value="ECO:0007669"/>
    <property type="project" value="UniProtKB-KW"/>
</dbReference>
<dbReference type="GO" id="GO:0000166">
    <property type="term" value="F:nucleotide binding"/>
    <property type="evidence" value="ECO:0007669"/>
    <property type="project" value="UniProtKB-KW"/>
</dbReference>
<dbReference type="GO" id="GO:0017111">
    <property type="term" value="F:ribonucleoside triphosphate phosphatase activity"/>
    <property type="evidence" value="ECO:0000250"/>
    <property type="project" value="UniProtKB"/>
</dbReference>
<dbReference type="GO" id="GO:0009117">
    <property type="term" value="P:nucleotide metabolic process"/>
    <property type="evidence" value="ECO:0007669"/>
    <property type="project" value="UniProtKB-KW"/>
</dbReference>
<dbReference type="GO" id="GO:0006772">
    <property type="term" value="P:thiamine metabolic process"/>
    <property type="evidence" value="ECO:0007669"/>
    <property type="project" value="TreeGrafter"/>
</dbReference>
<dbReference type="FunFam" id="3.90.950.10:FF:000002">
    <property type="entry name" value="Inosine/xanthosine triphosphatase"/>
    <property type="match status" value="1"/>
</dbReference>
<dbReference type="Gene3D" id="3.90.950.10">
    <property type="match status" value="1"/>
</dbReference>
<dbReference type="HAMAP" id="MF_00648">
    <property type="entry name" value="Non_canon_purine_NTPase_YjjX"/>
    <property type="match status" value="1"/>
</dbReference>
<dbReference type="InterPro" id="IPR029001">
    <property type="entry name" value="ITPase-like_fam"/>
</dbReference>
<dbReference type="InterPro" id="IPR002786">
    <property type="entry name" value="Non_canon_purine_NTPase"/>
</dbReference>
<dbReference type="InterPro" id="IPR026533">
    <property type="entry name" value="NTPase/PRRC1"/>
</dbReference>
<dbReference type="InterPro" id="IPR050299">
    <property type="entry name" value="YjjX_NTPase"/>
</dbReference>
<dbReference type="NCBIfam" id="TIGR00258">
    <property type="entry name" value="inosine/xanthosine triphosphatase"/>
    <property type="match status" value="1"/>
</dbReference>
<dbReference type="PANTHER" id="PTHR34699">
    <property type="match status" value="1"/>
</dbReference>
<dbReference type="PANTHER" id="PTHR34699:SF2">
    <property type="entry name" value="NON-CANONICAL PURINE NTP PHOSPHATASE_PRRC1 DOMAIN-CONTAINING PROTEIN"/>
    <property type="match status" value="1"/>
</dbReference>
<dbReference type="Pfam" id="PF01931">
    <property type="entry name" value="NTPase_I-T"/>
    <property type="match status" value="1"/>
</dbReference>
<dbReference type="SUPFAM" id="SSF52972">
    <property type="entry name" value="ITPase-like"/>
    <property type="match status" value="1"/>
</dbReference>
<accession>Q8TV89</accession>
<name>NCPP_METKA</name>
<organism>
    <name type="scientific">Methanopyrus kandleri (strain AV19 / DSM 6324 / JCM 9639 / NBRC 100938)</name>
    <dbReference type="NCBI Taxonomy" id="190192"/>
    <lineage>
        <taxon>Archaea</taxon>
        <taxon>Methanobacteriati</taxon>
        <taxon>Methanobacteriota</taxon>
        <taxon>Methanomada group</taxon>
        <taxon>Methanopyri</taxon>
        <taxon>Methanopyrales</taxon>
        <taxon>Methanopyraceae</taxon>
        <taxon>Methanopyrus</taxon>
    </lineage>
</organism>
<comment type="function">
    <text evidence="1">Phosphatase that hydrolyzes non-canonical purine nucleotides such as XTP and ITP to their respective diphosphate derivatives. Probably excludes non-canonical purines from DNA/RNA precursor pool, thus preventing their incorporation into DNA/RNA and avoiding chromosomal lesions.</text>
</comment>
<comment type="catalytic activity">
    <reaction evidence="1">
        <text>XTP + H2O = XDP + phosphate + H(+)</text>
        <dbReference type="Rhea" id="RHEA:28406"/>
        <dbReference type="ChEBI" id="CHEBI:15377"/>
        <dbReference type="ChEBI" id="CHEBI:15378"/>
        <dbReference type="ChEBI" id="CHEBI:43474"/>
        <dbReference type="ChEBI" id="CHEBI:59884"/>
        <dbReference type="ChEBI" id="CHEBI:61314"/>
        <dbReference type="EC" id="3.6.1.73"/>
    </reaction>
</comment>
<comment type="catalytic activity">
    <reaction evidence="1">
        <text>ITP + H2O = IDP + phosphate + H(+)</text>
        <dbReference type="Rhea" id="RHEA:28330"/>
        <dbReference type="ChEBI" id="CHEBI:15377"/>
        <dbReference type="ChEBI" id="CHEBI:15378"/>
        <dbReference type="ChEBI" id="CHEBI:43474"/>
        <dbReference type="ChEBI" id="CHEBI:58280"/>
        <dbReference type="ChEBI" id="CHEBI:61402"/>
        <dbReference type="EC" id="3.6.1.73"/>
    </reaction>
</comment>
<comment type="cofactor">
    <cofactor evidence="1">
        <name>Mg(2+)</name>
        <dbReference type="ChEBI" id="CHEBI:18420"/>
    </cofactor>
    <cofactor evidence="1">
        <name>Mn(2+)</name>
        <dbReference type="ChEBI" id="CHEBI:29035"/>
    </cofactor>
    <text evidence="1">Binds 1 divalent metal cation per subunit; can use either Mg(2+) or Mn(2+).</text>
</comment>
<comment type="subunit">
    <text evidence="1">Homodimer.</text>
</comment>
<comment type="similarity">
    <text evidence="1">Belongs to the YjjX NTPase family.</text>
</comment>
<reference key="1">
    <citation type="journal article" date="2002" name="Proc. Natl. Acad. Sci. U.S.A.">
        <title>The complete genome of hyperthermophile Methanopyrus kandleri AV19 and monophyly of archaeal methanogens.</title>
        <authorList>
            <person name="Slesarev A.I."/>
            <person name="Mezhevaya K.V."/>
            <person name="Makarova K.S."/>
            <person name="Polushin N.N."/>
            <person name="Shcherbinina O.V."/>
            <person name="Shakhova V.V."/>
            <person name="Belova G.I."/>
            <person name="Aravind L."/>
            <person name="Natale D.A."/>
            <person name="Rogozin I.B."/>
            <person name="Tatusov R.L."/>
            <person name="Wolf Y.I."/>
            <person name="Stetter K.O."/>
            <person name="Malykh A.G."/>
            <person name="Koonin E.V."/>
            <person name="Kozyavkin S.A."/>
        </authorList>
    </citation>
    <scope>NUCLEOTIDE SEQUENCE [LARGE SCALE GENOMIC DNA]</scope>
    <source>
        <strain>AV19 / DSM 6324 / JCM 9639 / NBRC 100938</strain>
    </source>
</reference>
<evidence type="ECO:0000255" key="1">
    <source>
        <dbReference type="HAMAP-Rule" id="MF_00648"/>
    </source>
</evidence>
<keyword id="KW-0378">Hydrolase</keyword>
<keyword id="KW-0460">Magnesium</keyword>
<keyword id="KW-0464">Manganese</keyword>
<keyword id="KW-0479">Metal-binding</keyword>
<keyword id="KW-0546">Nucleotide metabolism</keyword>
<keyword id="KW-0547">Nucleotide-binding</keyword>
<keyword id="KW-1185">Reference proteome</keyword>
<proteinExistence type="inferred from homology"/>
<protein>
    <recommendedName>
        <fullName evidence="1">Probable inosine/xanthosine triphosphatase</fullName>
        <shortName evidence="1">ITPase/XTPase</shortName>
        <ecNumber evidence="1">3.6.1.73</ecNumber>
    </recommendedName>
    <alternativeName>
        <fullName evidence="1">Non-canonical purine NTP phosphatase</fullName>
    </alternativeName>
    <alternativeName>
        <fullName evidence="1">Non-standard purine NTP phosphatase</fullName>
    </alternativeName>
    <alternativeName>
        <fullName evidence="1">Nucleoside-triphosphate phosphatase</fullName>
        <shortName evidence="1">NTPase</shortName>
    </alternativeName>
</protein>